<accession>Q9KH33</accession>
<dbReference type="EC" id="1.1.1.205" evidence="1"/>
<dbReference type="EMBL" id="AF272827">
    <property type="protein sequence ID" value="AAF85967.1"/>
    <property type="molecule type" value="Genomic_DNA"/>
</dbReference>
<dbReference type="UniPathway" id="UPA00601">
    <property type="reaction ID" value="UER00295"/>
</dbReference>
<dbReference type="GO" id="GO:0003938">
    <property type="term" value="F:IMP dehydrogenase activity"/>
    <property type="evidence" value="ECO:0007669"/>
    <property type="project" value="UniProtKB-UniRule"/>
</dbReference>
<dbReference type="GO" id="GO:0046872">
    <property type="term" value="F:metal ion binding"/>
    <property type="evidence" value="ECO:0007669"/>
    <property type="project" value="UniProtKB-UniRule"/>
</dbReference>
<dbReference type="GO" id="GO:0000166">
    <property type="term" value="F:nucleotide binding"/>
    <property type="evidence" value="ECO:0007669"/>
    <property type="project" value="UniProtKB-UniRule"/>
</dbReference>
<dbReference type="GO" id="GO:0006177">
    <property type="term" value="P:GMP biosynthetic process"/>
    <property type="evidence" value="ECO:0007669"/>
    <property type="project" value="UniProtKB-UniRule"/>
</dbReference>
<dbReference type="GO" id="GO:0006183">
    <property type="term" value="P:GTP biosynthetic process"/>
    <property type="evidence" value="ECO:0007669"/>
    <property type="project" value="TreeGrafter"/>
</dbReference>
<dbReference type="CDD" id="cd04601">
    <property type="entry name" value="CBS_pair_IMPDH"/>
    <property type="match status" value="1"/>
</dbReference>
<dbReference type="CDD" id="cd00381">
    <property type="entry name" value="IMPDH"/>
    <property type="match status" value="1"/>
</dbReference>
<dbReference type="FunFam" id="3.20.20.70:FF:000003">
    <property type="entry name" value="GMP reductase"/>
    <property type="match status" value="1"/>
</dbReference>
<dbReference type="Gene3D" id="3.20.20.70">
    <property type="entry name" value="Aldolase class I"/>
    <property type="match status" value="1"/>
</dbReference>
<dbReference type="HAMAP" id="MF_01964">
    <property type="entry name" value="IMPDH"/>
    <property type="match status" value="1"/>
</dbReference>
<dbReference type="InterPro" id="IPR013785">
    <property type="entry name" value="Aldolase_TIM"/>
</dbReference>
<dbReference type="InterPro" id="IPR000644">
    <property type="entry name" value="CBS_dom"/>
</dbReference>
<dbReference type="InterPro" id="IPR046342">
    <property type="entry name" value="CBS_dom_sf"/>
</dbReference>
<dbReference type="InterPro" id="IPR005990">
    <property type="entry name" value="IMP_DH"/>
</dbReference>
<dbReference type="InterPro" id="IPR015875">
    <property type="entry name" value="IMP_DH/GMP_Rdtase_CS"/>
</dbReference>
<dbReference type="InterPro" id="IPR001093">
    <property type="entry name" value="IMP_DH_GMPRt"/>
</dbReference>
<dbReference type="NCBIfam" id="TIGR01302">
    <property type="entry name" value="IMP_dehydrog"/>
    <property type="match status" value="1"/>
</dbReference>
<dbReference type="PANTHER" id="PTHR11911:SF111">
    <property type="entry name" value="INOSINE-5'-MONOPHOSPHATE DEHYDROGENASE"/>
    <property type="match status" value="1"/>
</dbReference>
<dbReference type="PANTHER" id="PTHR11911">
    <property type="entry name" value="INOSINE-5-MONOPHOSPHATE DEHYDROGENASE RELATED"/>
    <property type="match status" value="1"/>
</dbReference>
<dbReference type="Pfam" id="PF00571">
    <property type="entry name" value="CBS"/>
    <property type="match status" value="2"/>
</dbReference>
<dbReference type="Pfam" id="PF00478">
    <property type="entry name" value="IMPDH"/>
    <property type="match status" value="1"/>
</dbReference>
<dbReference type="PIRSF" id="PIRSF000130">
    <property type="entry name" value="IMPDH"/>
    <property type="match status" value="1"/>
</dbReference>
<dbReference type="SMART" id="SM00116">
    <property type="entry name" value="CBS"/>
    <property type="match status" value="2"/>
</dbReference>
<dbReference type="SMART" id="SM01240">
    <property type="entry name" value="IMPDH"/>
    <property type="match status" value="1"/>
</dbReference>
<dbReference type="SUPFAM" id="SSF54631">
    <property type="entry name" value="CBS-domain pair"/>
    <property type="match status" value="1"/>
</dbReference>
<dbReference type="SUPFAM" id="SSF51412">
    <property type="entry name" value="Inosine monophosphate dehydrogenase (IMPDH)"/>
    <property type="match status" value="1"/>
</dbReference>
<dbReference type="PROSITE" id="PS51371">
    <property type="entry name" value="CBS"/>
    <property type="match status" value="2"/>
</dbReference>
<dbReference type="PROSITE" id="PS00487">
    <property type="entry name" value="IMP_DH_GMP_RED"/>
    <property type="match status" value="1"/>
</dbReference>
<evidence type="ECO:0000255" key="1">
    <source>
        <dbReference type="HAMAP-Rule" id="MF_01964"/>
    </source>
</evidence>
<feature type="chain" id="PRO_0000093704" description="Inosine-5'-monophosphate dehydrogenase">
    <location>
        <begin position="1"/>
        <end position="498"/>
    </location>
</feature>
<feature type="domain" description="CBS 1" evidence="1">
    <location>
        <begin position="98"/>
        <end position="155"/>
    </location>
</feature>
<feature type="domain" description="CBS 2" evidence="1">
    <location>
        <begin position="159"/>
        <end position="216"/>
    </location>
</feature>
<feature type="active site" description="Thioimidate intermediate" evidence="1">
    <location>
        <position position="310"/>
    </location>
</feature>
<feature type="active site" description="Proton acceptor" evidence="1">
    <location>
        <position position="406"/>
    </location>
</feature>
<feature type="binding site" evidence="1">
    <location>
        <position position="253"/>
    </location>
    <ligand>
        <name>NAD(+)</name>
        <dbReference type="ChEBI" id="CHEBI:57540"/>
    </ligand>
</feature>
<feature type="binding site" evidence="1">
    <location>
        <begin position="303"/>
        <end position="305"/>
    </location>
    <ligand>
        <name>NAD(+)</name>
        <dbReference type="ChEBI" id="CHEBI:57540"/>
    </ligand>
</feature>
<feature type="binding site" description="in other chain" evidence="1">
    <location>
        <position position="305"/>
    </location>
    <ligand>
        <name>K(+)</name>
        <dbReference type="ChEBI" id="CHEBI:29103"/>
        <note>ligand shared between two tetrameric partners</note>
    </ligand>
</feature>
<feature type="binding site" description="in other chain" evidence="1">
    <location>
        <position position="307"/>
    </location>
    <ligand>
        <name>K(+)</name>
        <dbReference type="ChEBI" id="CHEBI:29103"/>
        <note>ligand shared between two tetrameric partners</note>
    </ligand>
</feature>
<feature type="binding site" evidence="1">
    <location>
        <position position="308"/>
    </location>
    <ligand>
        <name>IMP</name>
        <dbReference type="ChEBI" id="CHEBI:58053"/>
    </ligand>
</feature>
<feature type="binding site" description="in other chain" evidence="1">
    <location>
        <position position="310"/>
    </location>
    <ligand>
        <name>K(+)</name>
        <dbReference type="ChEBI" id="CHEBI:29103"/>
        <note>ligand shared between two tetrameric partners</note>
    </ligand>
</feature>
<feature type="binding site" evidence="1">
    <location>
        <begin position="343"/>
        <end position="345"/>
    </location>
    <ligand>
        <name>IMP</name>
        <dbReference type="ChEBI" id="CHEBI:58053"/>
    </ligand>
</feature>
<feature type="binding site" evidence="1">
    <location>
        <begin position="366"/>
        <end position="367"/>
    </location>
    <ligand>
        <name>IMP</name>
        <dbReference type="ChEBI" id="CHEBI:58053"/>
    </ligand>
</feature>
<feature type="binding site" evidence="1">
    <location>
        <begin position="390"/>
        <end position="394"/>
    </location>
    <ligand>
        <name>IMP</name>
        <dbReference type="ChEBI" id="CHEBI:58053"/>
    </ligand>
</feature>
<feature type="binding site" evidence="1">
    <location>
        <position position="421"/>
    </location>
    <ligand>
        <name>IMP</name>
        <dbReference type="ChEBI" id="CHEBI:58053"/>
    </ligand>
</feature>
<feature type="binding site" evidence="1">
    <location>
        <position position="475"/>
    </location>
    <ligand>
        <name>K(+)</name>
        <dbReference type="ChEBI" id="CHEBI:29103"/>
        <note>ligand shared between two tetrameric partners</note>
    </ligand>
</feature>
<feature type="binding site" evidence="1">
    <location>
        <position position="476"/>
    </location>
    <ligand>
        <name>K(+)</name>
        <dbReference type="ChEBI" id="CHEBI:29103"/>
        <note>ligand shared between two tetrameric partners</note>
    </ligand>
</feature>
<feature type="binding site" evidence="1">
    <location>
        <position position="477"/>
    </location>
    <ligand>
        <name>K(+)</name>
        <dbReference type="ChEBI" id="CHEBI:29103"/>
        <note>ligand shared between two tetrameric partners</note>
    </ligand>
</feature>
<organism>
    <name type="scientific">Rhizobium tropici</name>
    <dbReference type="NCBI Taxonomy" id="398"/>
    <lineage>
        <taxon>Bacteria</taxon>
        <taxon>Pseudomonadati</taxon>
        <taxon>Pseudomonadota</taxon>
        <taxon>Alphaproteobacteria</taxon>
        <taxon>Hyphomicrobiales</taxon>
        <taxon>Rhizobiaceae</taxon>
        <taxon>Rhizobium/Agrobacterium group</taxon>
        <taxon>Rhizobium</taxon>
    </lineage>
</organism>
<reference key="1">
    <citation type="journal article" date="2000" name="Mol. Plant Microbe Interact.">
        <title>A guaB mutant strain of Rhizobium tropici CIAT899 pleiotropically defective in thermal tolerance and symbiosis.</title>
        <authorList>
            <person name="Riccillo P.M."/>
            <person name="Collavino M.M."/>
            <person name="Grasso D.H."/>
            <person name="England R."/>
            <person name="de Bruijn F.J."/>
            <person name="Aguilar O.M."/>
        </authorList>
    </citation>
    <scope>NUCLEOTIDE SEQUENCE [GENOMIC DNA]</scope>
    <source>
        <strain>899</strain>
    </source>
</reference>
<protein>
    <recommendedName>
        <fullName evidence="1">Inosine-5'-monophosphate dehydrogenase</fullName>
        <shortName evidence="1">IMP dehydrogenase</shortName>
        <shortName evidence="1">IMPD</shortName>
        <shortName evidence="1">IMPDH</shortName>
        <ecNumber evidence="1">1.1.1.205</ecNumber>
    </recommendedName>
</protein>
<keyword id="KW-0129">CBS domain</keyword>
<keyword id="KW-0332">GMP biosynthesis</keyword>
<keyword id="KW-0479">Metal-binding</keyword>
<keyword id="KW-0520">NAD</keyword>
<keyword id="KW-0560">Oxidoreductase</keyword>
<keyword id="KW-0630">Potassium</keyword>
<keyword id="KW-0658">Purine biosynthesis</keyword>
<keyword id="KW-0677">Repeat</keyword>
<name>IMDH_RHITR</name>
<comment type="function">
    <text evidence="1">Catalyzes the conversion of inosine 5'-phosphate (IMP) to xanthosine 5'-phosphate (XMP), the first committed and rate-limiting step in the de novo synthesis of guanine nucleotides, and therefore plays an important role in the regulation of cell growth.</text>
</comment>
<comment type="catalytic activity">
    <reaction evidence="1">
        <text>IMP + NAD(+) + H2O = XMP + NADH + H(+)</text>
        <dbReference type="Rhea" id="RHEA:11708"/>
        <dbReference type="ChEBI" id="CHEBI:15377"/>
        <dbReference type="ChEBI" id="CHEBI:15378"/>
        <dbReference type="ChEBI" id="CHEBI:57464"/>
        <dbReference type="ChEBI" id="CHEBI:57540"/>
        <dbReference type="ChEBI" id="CHEBI:57945"/>
        <dbReference type="ChEBI" id="CHEBI:58053"/>
        <dbReference type="EC" id="1.1.1.205"/>
    </reaction>
</comment>
<comment type="cofactor">
    <cofactor evidence="1">
        <name>K(+)</name>
        <dbReference type="ChEBI" id="CHEBI:29103"/>
    </cofactor>
</comment>
<comment type="activity regulation">
    <text evidence="1">Mycophenolic acid (MPA) is a non-competitive inhibitor that prevents formation of the closed enzyme conformation by binding to the same site as the amobile flap. In contrast, mizoribine monophosphate (MZP) is a competitive inhibitor that induces the closed conformation. MPA is a potent inhibitor of mammalian IMPDHs but a poor inhibitor of the bacterial enzymes. MZP is a more potent inhibitor of bacterial IMPDH.</text>
</comment>
<comment type="pathway">
    <text evidence="1">Purine metabolism; XMP biosynthesis via de novo pathway; XMP from IMP: step 1/1.</text>
</comment>
<comment type="subunit">
    <text evidence="1">Homotetramer.</text>
</comment>
<comment type="similarity">
    <text evidence="1">Belongs to the IMPDH/GMPR family.</text>
</comment>
<sequence>MARIIETSTGLDALTFDDVLLQPGHSEVMPGQTNIATRIAQDIELNVPILSAAMDTVTESRLAIAMAQAGGMGVIHRNLTPVQQAEEVRQVKKFESGMVVNPVTIGPDATLAEALSLDEGPRHFRASPVVEKSHRLVGILTNRDVRFASDPEQKIYELMTRENLVTVKDGVQQHEAKRLLHTHRIEKXLVVDADSRFVGLITVKDIEKSQLNPHASKDAQGRLRAAAAISVGDDGYERAERLIDAGVDLLVVDTAHGHSQRVLDAVTRVKKLSNSVRIMAGNVATYDGTRALIDAGADAVKVGIGPGSICTTRIVAGVGVPQLAAIMSAVQAAQDQNIPIIADGGIKFSGDLAKAIAAGASAAMIGSLLAGTDESPGEVYLYQGRSFKAYRGMGSVGAMARGSADRYFQAEVRDTLKLVPEGIEGXVPYKGPVSGVLHQLAGGLKAAMGYVGGADLKDFQERATFVRISGAGLRESHAHDVTITPRKARIIPAQAADR</sequence>
<proteinExistence type="inferred from homology"/>
<gene>
    <name evidence="1" type="primary">guaB</name>
</gene>